<organism>
    <name type="scientific">Lactococcus lactis subsp. cremoris (strain MG1363)</name>
    <dbReference type="NCBI Taxonomy" id="416870"/>
    <lineage>
        <taxon>Bacteria</taxon>
        <taxon>Bacillati</taxon>
        <taxon>Bacillota</taxon>
        <taxon>Bacilli</taxon>
        <taxon>Lactobacillales</taxon>
        <taxon>Streptococcaceae</taxon>
        <taxon>Lactococcus</taxon>
        <taxon>Lactococcus cremoris subsp. cremoris</taxon>
    </lineage>
</organism>
<evidence type="ECO:0000250" key="1"/>
<evidence type="ECO:0000255" key="2">
    <source>
        <dbReference type="HAMAP-Rule" id="MF_00100"/>
    </source>
</evidence>
<evidence type="ECO:0000256" key="3">
    <source>
        <dbReference type="SAM" id="MobiDB-lite"/>
    </source>
</evidence>
<gene>
    <name evidence="2" type="primary">infB</name>
    <name type="ordered locus">llmg_1792</name>
</gene>
<feature type="chain" id="PRO_0000335482" description="Translation initiation factor IF-2">
    <location>
        <begin position="1"/>
        <end position="950"/>
    </location>
</feature>
<feature type="domain" description="tr-type G">
    <location>
        <begin position="448"/>
        <end position="619"/>
    </location>
</feature>
<feature type="region of interest" description="Disordered" evidence="3">
    <location>
        <begin position="128"/>
        <end position="354"/>
    </location>
</feature>
<feature type="region of interest" description="G1" evidence="1">
    <location>
        <begin position="457"/>
        <end position="464"/>
    </location>
</feature>
<feature type="region of interest" description="G2" evidence="1">
    <location>
        <begin position="482"/>
        <end position="486"/>
    </location>
</feature>
<feature type="region of interest" description="G3" evidence="1">
    <location>
        <begin position="503"/>
        <end position="506"/>
    </location>
</feature>
<feature type="region of interest" description="G4" evidence="1">
    <location>
        <begin position="557"/>
        <end position="560"/>
    </location>
</feature>
<feature type="region of interest" description="G5" evidence="1">
    <location>
        <begin position="595"/>
        <end position="597"/>
    </location>
</feature>
<feature type="compositionally biased region" description="Basic and acidic residues" evidence="3">
    <location>
        <begin position="128"/>
        <end position="158"/>
    </location>
</feature>
<feature type="compositionally biased region" description="Basic and acidic residues" evidence="3">
    <location>
        <begin position="165"/>
        <end position="186"/>
    </location>
</feature>
<feature type="compositionally biased region" description="Basic and acidic residues" evidence="3">
    <location>
        <begin position="200"/>
        <end position="234"/>
    </location>
</feature>
<feature type="compositionally biased region" description="Basic and acidic residues" evidence="3">
    <location>
        <begin position="291"/>
        <end position="312"/>
    </location>
</feature>
<feature type="compositionally biased region" description="Polar residues" evidence="3">
    <location>
        <begin position="322"/>
        <end position="336"/>
    </location>
</feature>
<feature type="compositionally biased region" description="Polar residues" evidence="3">
    <location>
        <begin position="343"/>
        <end position="353"/>
    </location>
</feature>
<feature type="binding site" evidence="2">
    <location>
        <begin position="457"/>
        <end position="464"/>
    </location>
    <ligand>
        <name>GTP</name>
        <dbReference type="ChEBI" id="CHEBI:37565"/>
    </ligand>
</feature>
<feature type="binding site" evidence="2">
    <location>
        <begin position="503"/>
        <end position="507"/>
    </location>
    <ligand>
        <name>GTP</name>
        <dbReference type="ChEBI" id="CHEBI:37565"/>
    </ligand>
</feature>
<feature type="binding site" evidence="2">
    <location>
        <begin position="557"/>
        <end position="560"/>
    </location>
    <ligand>
        <name>GTP</name>
        <dbReference type="ChEBI" id="CHEBI:37565"/>
    </ligand>
</feature>
<comment type="function">
    <text evidence="2">One of the essential components for the initiation of protein synthesis. Protects formylmethionyl-tRNA from spontaneous hydrolysis and promotes its binding to the 30S ribosomal subunits. Also involved in the hydrolysis of GTP during the formation of the 70S ribosomal complex.</text>
</comment>
<comment type="subcellular location">
    <subcellularLocation>
        <location evidence="2">Cytoplasm</location>
    </subcellularLocation>
</comment>
<comment type="similarity">
    <text evidence="2">Belongs to the TRAFAC class translation factor GTPase superfamily. Classic translation factor GTPase family. IF-2 subfamily.</text>
</comment>
<reference key="1">
    <citation type="journal article" date="2007" name="J. Bacteriol.">
        <title>The complete genome sequence of the lactic acid bacterial paradigm Lactococcus lactis subsp. cremoris MG1363.</title>
        <authorList>
            <person name="Wegmann U."/>
            <person name="O'Connell-Motherway M."/>
            <person name="Zomer A."/>
            <person name="Buist G."/>
            <person name="Shearman C."/>
            <person name="Canchaya C."/>
            <person name="Ventura M."/>
            <person name="Goesmann A."/>
            <person name="Gasson M.J."/>
            <person name="Kuipers O.P."/>
            <person name="van Sinderen D."/>
            <person name="Kok J."/>
        </authorList>
    </citation>
    <scope>NUCLEOTIDE SEQUENCE [LARGE SCALE GENOMIC DNA]</scope>
    <source>
        <strain>MG1363</strain>
    </source>
</reference>
<sequence length="950" mass="104581">MSDKKRINQIAKETGLSNTELVATAQSLGFEVKSHSSSVTAEQAEKIIQGVKTGTDTIVKPAEKTVKAKIKTVPETAKSKQEDHPRTFAGKAVVEDPAILARIKEKEEAKKAAKTEAEPIEEVITTEKPKVAEPVKKSEPKAAAKAEETKVEKVEAKAKTVTPKAEVKTENVADKKEPVVTEEKKKSLTQKPRIQIKVIKRAEDIKKEQAAARPEKKKFDKNRNDRNNRNDNRRPNQNGNGQGHSQGGNHYDKNRPAGQGQNQGQKRDKFASSGSSSTSDTFTPAASGKNNRRDRDRKKTDSNRDNTKDGNRKGGPLRVNDNRNQVRNARNSNWNQKGGRGRYQNNQSSSVPATQRKFHELPESLEYEVGMNVQDIAKSIKREPAEIIKKLFMMGTMVNQNQSLDEDTIELILMDYGVTPLKKVEEDKSDIERLFVEDGYLNEDKMVERPAVVTIMGHVDHGKTTLLDRFRESRVTEGEAGGITQHIGAYQIKTNGKKITFLDTPGHEAFTSMRARGASVTDITILVVAADDGVMPQTIEAINHSKAAGVPIIVAINKIDKPGANPQRVTQELTEHGVFPVAWDPENGSEFVEISAKFNQNLEELLDTVLLVAEVQELKADPSVRAIGTVVEARLDQGKGAIATLLVQQGTLHIQDPIVVGNTYGRVRTMTNDLGRRIKEAGPSTPIELTGLSDVPQAGDHFAVFEDEKAARAAGEERAKRAQLIKRQNTRRVNLDNLFDTLKEGQTKSVNIIIKADVQGSAEALAASLQKIEVEGVKVDIVHSAVGAISESDISLAAASNAIIIGFNVRPTGLAREQAAQEEVDIRLHSIIYKVIEEVETAMRGMLDPEFKEEIIGEAIVRETFNVSKVGTIAGFMVIRGKVTRDASVRVIREGVVIHDGAIASLKHFKDDVKEVGNAQEGGLMVEDFNDVEIDDTFEVYKMVEIERKK</sequence>
<name>IF2_LACLM</name>
<keyword id="KW-0963">Cytoplasm</keyword>
<keyword id="KW-0342">GTP-binding</keyword>
<keyword id="KW-0396">Initiation factor</keyword>
<keyword id="KW-0547">Nucleotide-binding</keyword>
<keyword id="KW-0648">Protein biosynthesis</keyword>
<accession>A2RM37</accession>
<protein>
    <recommendedName>
        <fullName evidence="2">Translation initiation factor IF-2</fullName>
    </recommendedName>
</protein>
<proteinExistence type="inferred from homology"/>
<dbReference type="EMBL" id="AM406671">
    <property type="protein sequence ID" value="CAL98364.1"/>
    <property type="molecule type" value="Genomic_DNA"/>
</dbReference>
<dbReference type="RefSeq" id="WP_011835571.1">
    <property type="nucleotide sequence ID" value="NC_009004.1"/>
</dbReference>
<dbReference type="SMR" id="A2RM37"/>
<dbReference type="STRING" id="416870.llmg_1792"/>
<dbReference type="KEGG" id="llm:llmg_1792"/>
<dbReference type="eggNOG" id="COG0532">
    <property type="taxonomic scope" value="Bacteria"/>
</dbReference>
<dbReference type="HOGENOM" id="CLU_006301_5_0_9"/>
<dbReference type="OrthoDB" id="9811804at2"/>
<dbReference type="PhylomeDB" id="A2RM37"/>
<dbReference type="Proteomes" id="UP000000364">
    <property type="component" value="Chromosome"/>
</dbReference>
<dbReference type="GO" id="GO:0005829">
    <property type="term" value="C:cytosol"/>
    <property type="evidence" value="ECO:0007669"/>
    <property type="project" value="TreeGrafter"/>
</dbReference>
<dbReference type="GO" id="GO:0005525">
    <property type="term" value="F:GTP binding"/>
    <property type="evidence" value="ECO:0007669"/>
    <property type="project" value="UniProtKB-KW"/>
</dbReference>
<dbReference type="GO" id="GO:0003924">
    <property type="term" value="F:GTPase activity"/>
    <property type="evidence" value="ECO:0007669"/>
    <property type="project" value="UniProtKB-UniRule"/>
</dbReference>
<dbReference type="GO" id="GO:0003743">
    <property type="term" value="F:translation initiation factor activity"/>
    <property type="evidence" value="ECO:0007669"/>
    <property type="project" value="UniProtKB-UniRule"/>
</dbReference>
<dbReference type="CDD" id="cd01887">
    <property type="entry name" value="IF2_eIF5B"/>
    <property type="match status" value="1"/>
</dbReference>
<dbReference type="CDD" id="cd03702">
    <property type="entry name" value="IF2_mtIF2_II"/>
    <property type="match status" value="1"/>
</dbReference>
<dbReference type="CDD" id="cd03692">
    <property type="entry name" value="mtIF2_IVc"/>
    <property type="match status" value="1"/>
</dbReference>
<dbReference type="FunFam" id="2.40.30.10:FF:000007">
    <property type="entry name" value="Translation initiation factor IF-2"/>
    <property type="match status" value="1"/>
</dbReference>
<dbReference type="FunFam" id="2.40.30.10:FF:000008">
    <property type="entry name" value="Translation initiation factor IF-2"/>
    <property type="match status" value="1"/>
</dbReference>
<dbReference type="FunFam" id="3.40.50.10050:FF:000001">
    <property type="entry name" value="Translation initiation factor IF-2"/>
    <property type="match status" value="1"/>
</dbReference>
<dbReference type="FunFam" id="3.40.50.300:FF:000019">
    <property type="entry name" value="Translation initiation factor IF-2"/>
    <property type="match status" value="1"/>
</dbReference>
<dbReference type="Gene3D" id="1.10.10.2480">
    <property type="match status" value="1"/>
</dbReference>
<dbReference type="Gene3D" id="3.40.50.300">
    <property type="entry name" value="P-loop containing nucleotide triphosphate hydrolases"/>
    <property type="match status" value="1"/>
</dbReference>
<dbReference type="Gene3D" id="2.40.30.10">
    <property type="entry name" value="Translation factors"/>
    <property type="match status" value="2"/>
</dbReference>
<dbReference type="Gene3D" id="3.40.50.10050">
    <property type="entry name" value="Translation initiation factor IF- 2, domain 3"/>
    <property type="match status" value="1"/>
</dbReference>
<dbReference type="HAMAP" id="MF_00100_B">
    <property type="entry name" value="IF_2_B"/>
    <property type="match status" value="1"/>
</dbReference>
<dbReference type="InterPro" id="IPR053905">
    <property type="entry name" value="EF-G-like_DII"/>
</dbReference>
<dbReference type="InterPro" id="IPR044145">
    <property type="entry name" value="IF2_II"/>
</dbReference>
<dbReference type="InterPro" id="IPR006847">
    <property type="entry name" value="IF2_N"/>
</dbReference>
<dbReference type="InterPro" id="IPR027417">
    <property type="entry name" value="P-loop_NTPase"/>
</dbReference>
<dbReference type="InterPro" id="IPR005225">
    <property type="entry name" value="Small_GTP-bd"/>
</dbReference>
<dbReference type="InterPro" id="IPR000795">
    <property type="entry name" value="T_Tr_GTP-bd_dom"/>
</dbReference>
<dbReference type="InterPro" id="IPR000178">
    <property type="entry name" value="TF_IF2_bacterial-like"/>
</dbReference>
<dbReference type="InterPro" id="IPR015760">
    <property type="entry name" value="TIF_IF2"/>
</dbReference>
<dbReference type="InterPro" id="IPR023115">
    <property type="entry name" value="TIF_IF2_dom3"/>
</dbReference>
<dbReference type="InterPro" id="IPR036925">
    <property type="entry name" value="TIF_IF2_dom3_sf"/>
</dbReference>
<dbReference type="InterPro" id="IPR009000">
    <property type="entry name" value="Transl_B-barrel_sf"/>
</dbReference>
<dbReference type="NCBIfam" id="TIGR00487">
    <property type="entry name" value="IF-2"/>
    <property type="match status" value="1"/>
</dbReference>
<dbReference type="NCBIfam" id="TIGR00231">
    <property type="entry name" value="small_GTP"/>
    <property type="match status" value="1"/>
</dbReference>
<dbReference type="PANTHER" id="PTHR43381:SF5">
    <property type="entry name" value="TR-TYPE G DOMAIN-CONTAINING PROTEIN"/>
    <property type="match status" value="1"/>
</dbReference>
<dbReference type="PANTHER" id="PTHR43381">
    <property type="entry name" value="TRANSLATION INITIATION FACTOR IF-2-RELATED"/>
    <property type="match status" value="1"/>
</dbReference>
<dbReference type="Pfam" id="PF22042">
    <property type="entry name" value="EF-G_D2"/>
    <property type="match status" value="1"/>
</dbReference>
<dbReference type="Pfam" id="PF00009">
    <property type="entry name" value="GTP_EFTU"/>
    <property type="match status" value="1"/>
</dbReference>
<dbReference type="Pfam" id="PF11987">
    <property type="entry name" value="IF-2"/>
    <property type="match status" value="1"/>
</dbReference>
<dbReference type="Pfam" id="PF04760">
    <property type="entry name" value="IF2_N"/>
    <property type="match status" value="2"/>
</dbReference>
<dbReference type="PRINTS" id="PR00449">
    <property type="entry name" value="RASTRNSFRMNG"/>
</dbReference>
<dbReference type="SUPFAM" id="SSF52156">
    <property type="entry name" value="Initiation factor IF2/eIF5b, domain 3"/>
    <property type="match status" value="1"/>
</dbReference>
<dbReference type="SUPFAM" id="SSF52540">
    <property type="entry name" value="P-loop containing nucleoside triphosphate hydrolases"/>
    <property type="match status" value="1"/>
</dbReference>
<dbReference type="SUPFAM" id="SSF50447">
    <property type="entry name" value="Translation proteins"/>
    <property type="match status" value="2"/>
</dbReference>
<dbReference type="PROSITE" id="PS51722">
    <property type="entry name" value="G_TR_2"/>
    <property type="match status" value="1"/>
</dbReference>
<dbReference type="PROSITE" id="PS01176">
    <property type="entry name" value="IF2"/>
    <property type="match status" value="1"/>
</dbReference>